<reference key="1">
    <citation type="journal article" date="2002" name="Genome Lett.">
        <title>Structure and expression of the murine annexin A9 gene.</title>
        <authorList>
            <person name="Markoff A."/>
            <person name="Kuryshev V."/>
            <person name="Vorobyov E."/>
            <person name="Bogdanova N."/>
            <person name="Rescher U."/>
            <person name="Goebeler V."/>
            <person name="Kondrashov A."/>
            <person name="Gerke V."/>
        </authorList>
    </citation>
    <scope>NUCLEOTIDE SEQUENCE [GENOMIC DNA]</scope>
    <source>
        <strain>129/Sv</strain>
    </source>
</reference>
<reference key="2">
    <citation type="submission" date="2000-06" db="EMBL/GenBank/DDBJ databases">
        <title>Role of ancient chromosomal duplications in the conserved gene organization, paralogous linkage and RGD synaptomorphy of annexins A1, A2 and A9.</title>
        <authorList>
            <person name="Fernandez M.-P."/>
            <person name="Copeland N.G."/>
            <person name="Jenkins N.A."/>
            <person name="Gilbert D.J."/>
            <person name="Morgan R.O."/>
        </authorList>
    </citation>
    <scope>NUCLEOTIDE SEQUENCE [MRNA]</scope>
</reference>
<reference key="3">
    <citation type="journal article" date="2005" name="Science">
        <title>The transcriptional landscape of the mammalian genome.</title>
        <authorList>
            <person name="Carninci P."/>
            <person name="Kasukawa T."/>
            <person name="Katayama S."/>
            <person name="Gough J."/>
            <person name="Frith M.C."/>
            <person name="Maeda N."/>
            <person name="Oyama R."/>
            <person name="Ravasi T."/>
            <person name="Lenhard B."/>
            <person name="Wells C."/>
            <person name="Kodzius R."/>
            <person name="Shimokawa K."/>
            <person name="Bajic V.B."/>
            <person name="Brenner S.E."/>
            <person name="Batalov S."/>
            <person name="Forrest A.R."/>
            <person name="Zavolan M."/>
            <person name="Davis M.J."/>
            <person name="Wilming L.G."/>
            <person name="Aidinis V."/>
            <person name="Allen J.E."/>
            <person name="Ambesi-Impiombato A."/>
            <person name="Apweiler R."/>
            <person name="Aturaliya R.N."/>
            <person name="Bailey T.L."/>
            <person name="Bansal M."/>
            <person name="Baxter L."/>
            <person name="Beisel K.W."/>
            <person name="Bersano T."/>
            <person name="Bono H."/>
            <person name="Chalk A.M."/>
            <person name="Chiu K.P."/>
            <person name="Choudhary V."/>
            <person name="Christoffels A."/>
            <person name="Clutterbuck D.R."/>
            <person name="Crowe M.L."/>
            <person name="Dalla E."/>
            <person name="Dalrymple B.P."/>
            <person name="de Bono B."/>
            <person name="Della Gatta G."/>
            <person name="di Bernardo D."/>
            <person name="Down T."/>
            <person name="Engstrom P."/>
            <person name="Fagiolini M."/>
            <person name="Faulkner G."/>
            <person name="Fletcher C.F."/>
            <person name="Fukushima T."/>
            <person name="Furuno M."/>
            <person name="Futaki S."/>
            <person name="Gariboldi M."/>
            <person name="Georgii-Hemming P."/>
            <person name="Gingeras T.R."/>
            <person name="Gojobori T."/>
            <person name="Green R.E."/>
            <person name="Gustincich S."/>
            <person name="Harbers M."/>
            <person name="Hayashi Y."/>
            <person name="Hensch T.K."/>
            <person name="Hirokawa N."/>
            <person name="Hill D."/>
            <person name="Huminiecki L."/>
            <person name="Iacono M."/>
            <person name="Ikeo K."/>
            <person name="Iwama A."/>
            <person name="Ishikawa T."/>
            <person name="Jakt M."/>
            <person name="Kanapin A."/>
            <person name="Katoh M."/>
            <person name="Kawasawa Y."/>
            <person name="Kelso J."/>
            <person name="Kitamura H."/>
            <person name="Kitano H."/>
            <person name="Kollias G."/>
            <person name="Krishnan S.P."/>
            <person name="Kruger A."/>
            <person name="Kummerfeld S.K."/>
            <person name="Kurochkin I.V."/>
            <person name="Lareau L.F."/>
            <person name="Lazarevic D."/>
            <person name="Lipovich L."/>
            <person name="Liu J."/>
            <person name="Liuni S."/>
            <person name="McWilliam S."/>
            <person name="Madan Babu M."/>
            <person name="Madera M."/>
            <person name="Marchionni L."/>
            <person name="Matsuda H."/>
            <person name="Matsuzawa S."/>
            <person name="Miki H."/>
            <person name="Mignone F."/>
            <person name="Miyake S."/>
            <person name="Morris K."/>
            <person name="Mottagui-Tabar S."/>
            <person name="Mulder N."/>
            <person name="Nakano N."/>
            <person name="Nakauchi H."/>
            <person name="Ng P."/>
            <person name="Nilsson R."/>
            <person name="Nishiguchi S."/>
            <person name="Nishikawa S."/>
            <person name="Nori F."/>
            <person name="Ohara O."/>
            <person name="Okazaki Y."/>
            <person name="Orlando V."/>
            <person name="Pang K.C."/>
            <person name="Pavan W.J."/>
            <person name="Pavesi G."/>
            <person name="Pesole G."/>
            <person name="Petrovsky N."/>
            <person name="Piazza S."/>
            <person name="Reed J."/>
            <person name="Reid J.F."/>
            <person name="Ring B.Z."/>
            <person name="Ringwald M."/>
            <person name="Rost B."/>
            <person name="Ruan Y."/>
            <person name="Salzberg S.L."/>
            <person name="Sandelin A."/>
            <person name="Schneider C."/>
            <person name="Schoenbach C."/>
            <person name="Sekiguchi K."/>
            <person name="Semple C.A."/>
            <person name="Seno S."/>
            <person name="Sessa L."/>
            <person name="Sheng Y."/>
            <person name="Shibata Y."/>
            <person name="Shimada H."/>
            <person name="Shimada K."/>
            <person name="Silva D."/>
            <person name="Sinclair B."/>
            <person name="Sperling S."/>
            <person name="Stupka E."/>
            <person name="Sugiura K."/>
            <person name="Sultana R."/>
            <person name="Takenaka Y."/>
            <person name="Taki K."/>
            <person name="Tammoja K."/>
            <person name="Tan S.L."/>
            <person name="Tang S."/>
            <person name="Taylor M.S."/>
            <person name="Tegner J."/>
            <person name="Teichmann S.A."/>
            <person name="Ueda H.R."/>
            <person name="van Nimwegen E."/>
            <person name="Verardo R."/>
            <person name="Wei C.L."/>
            <person name="Yagi K."/>
            <person name="Yamanishi H."/>
            <person name="Zabarovsky E."/>
            <person name="Zhu S."/>
            <person name="Zimmer A."/>
            <person name="Hide W."/>
            <person name="Bult C."/>
            <person name="Grimmond S.M."/>
            <person name="Teasdale R.D."/>
            <person name="Liu E.T."/>
            <person name="Brusic V."/>
            <person name="Quackenbush J."/>
            <person name="Wahlestedt C."/>
            <person name="Mattick J.S."/>
            <person name="Hume D.A."/>
            <person name="Kai C."/>
            <person name="Sasaki D."/>
            <person name="Tomaru Y."/>
            <person name="Fukuda S."/>
            <person name="Kanamori-Katayama M."/>
            <person name="Suzuki M."/>
            <person name="Aoki J."/>
            <person name="Arakawa T."/>
            <person name="Iida J."/>
            <person name="Imamura K."/>
            <person name="Itoh M."/>
            <person name="Kato T."/>
            <person name="Kawaji H."/>
            <person name="Kawagashira N."/>
            <person name="Kawashima T."/>
            <person name="Kojima M."/>
            <person name="Kondo S."/>
            <person name="Konno H."/>
            <person name="Nakano K."/>
            <person name="Ninomiya N."/>
            <person name="Nishio T."/>
            <person name="Okada M."/>
            <person name="Plessy C."/>
            <person name="Shibata K."/>
            <person name="Shiraki T."/>
            <person name="Suzuki S."/>
            <person name="Tagami M."/>
            <person name="Waki K."/>
            <person name="Watahiki A."/>
            <person name="Okamura-Oho Y."/>
            <person name="Suzuki H."/>
            <person name="Kawai J."/>
            <person name="Hayashizaki Y."/>
        </authorList>
    </citation>
    <scope>NUCLEOTIDE SEQUENCE [LARGE SCALE MRNA]</scope>
    <source>
        <strain>C57BL/6J</strain>
        <tissue>Embryo</tissue>
        <tissue>Tongue</tissue>
    </source>
</reference>
<reference key="4">
    <citation type="journal article" date="2004" name="Genome Res.">
        <title>The status, quality, and expansion of the NIH full-length cDNA project: the Mammalian Gene Collection (MGC).</title>
        <authorList>
            <consortium name="The MGC Project Team"/>
        </authorList>
    </citation>
    <scope>NUCLEOTIDE SEQUENCE [LARGE SCALE MRNA]</scope>
    <source>
        <tissue>Jaw</tissue>
        <tissue>Limb</tissue>
    </source>
</reference>
<name>ANXA9_MOUSE</name>
<protein>
    <recommendedName>
        <fullName>Annexin A9</fullName>
    </recommendedName>
    <alternativeName>
        <fullName>Annexin XXXI</fullName>
    </alternativeName>
    <alternativeName>
        <fullName>Annexin-31</fullName>
    </alternativeName>
    <alternativeName>
        <fullName>Annexin-9</fullName>
    </alternativeName>
</protein>
<comment type="function">
    <text evidence="1">May act as a low affinity receptor for acetylcholine.</text>
</comment>
<comment type="subunit">
    <text evidence="1">Homodimer.</text>
</comment>
<comment type="similarity">
    <text evidence="2 3">Belongs to the annexin family.</text>
</comment>
<comment type="sequence caution" evidence="3">
    <conflict type="frameshift">
        <sequence resource="EMBL-CDS" id="CAB95698"/>
    </conflict>
</comment>
<gene>
    <name type="primary">Anxa9</name>
</gene>
<organism>
    <name type="scientific">Mus musculus</name>
    <name type="common">Mouse</name>
    <dbReference type="NCBI Taxonomy" id="10090"/>
    <lineage>
        <taxon>Eukaryota</taxon>
        <taxon>Metazoa</taxon>
        <taxon>Chordata</taxon>
        <taxon>Craniata</taxon>
        <taxon>Vertebrata</taxon>
        <taxon>Euteleostomi</taxon>
        <taxon>Mammalia</taxon>
        <taxon>Eutheria</taxon>
        <taxon>Euarchontoglires</taxon>
        <taxon>Glires</taxon>
        <taxon>Rodentia</taxon>
        <taxon>Myomorpha</taxon>
        <taxon>Muroidea</taxon>
        <taxon>Muridae</taxon>
        <taxon>Murinae</taxon>
        <taxon>Mus</taxon>
        <taxon>Mus</taxon>
    </lineage>
</organism>
<keyword id="KW-0041">Annexin</keyword>
<keyword id="KW-0675">Receptor</keyword>
<keyword id="KW-1185">Reference proteome</keyword>
<keyword id="KW-0677">Repeat</keyword>
<evidence type="ECO:0000250" key="1"/>
<evidence type="ECO:0000255" key="2">
    <source>
        <dbReference type="PROSITE-ProRule" id="PRU01245"/>
    </source>
</evidence>
<evidence type="ECO:0000305" key="3"/>
<sequence>MSASCGPLGTSLTQEILSSLGLADKTAAWGTLGTLRTFLSFSVDKDVQRLLKAIAGQGVDYDTIVDVLTNRSREQRQLISRAFQERTKQDLLKSLQAALSGNLEKIVVALLQPAAQFDAQELRTALKTSGSAEDVALEILATRAAPGLQACLAVYKHDFQVEAEEDIRTETNGILQDLLLALSKGDRESYSGIIDYNLEEQDVRALQQAGESSTAGQWVLLLTQRSPEHLIRVFDQYRRCTGQELEDAIRNCFHGDAQLALISLASMLRNTALYFANKLHQALQETEPNFQVLTRVLISRSESDLLSIRAEFKKKFGKSLYSSLQDVVRGDCRSALLALCRAEDI</sequence>
<accession>Q9JHQ0</accession>
<accession>Q9CQS1</accession>
<proteinExistence type="evidence at transcript level"/>
<feature type="chain" id="PRO_0000067506" description="Annexin A9">
    <location>
        <begin position="1"/>
        <end position="345"/>
    </location>
</feature>
<feature type="repeat" description="Annexin 1" evidence="2">
    <location>
        <begin position="41"/>
        <end position="112"/>
    </location>
</feature>
<feature type="repeat" description="Annexin 2" evidence="2">
    <location>
        <begin position="113"/>
        <end position="184"/>
    </location>
</feature>
<feature type="repeat" description="Annexin 3" evidence="2">
    <location>
        <begin position="197"/>
        <end position="266"/>
    </location>
</feature>
<feature type="repeat" description="Annexin 4" evidence="2">
    <location>
        <begin position="270"/>
        <end position="341"/>
    </location>
</feature>
<feature type="sequence conflict" description="In Ref. 2; CAB95698." evidence="3" ref="2">
    <original>APG</original>
    <variation>FSR</variation>
    <location>
        <begin position="145"/>
        <end position="147"/>
    </location>
</feature>
<dbReference type="EMBL" id="AF437742">
    <property type="protein sequence ID" value="AAO37381.1"/>
    <property type="molecule type" value="Genomic_DNA"/>
</dbReference>
<dbReference type="EMBL" id="AJ401160">
    <property type="protein sequence ID" value="CAB95698.1"/>
    <property type="status" value="ALT_FRAME"/>
    <property type="molecule type" value="mRNA"/>
</dbReference>
<dbReference type="EMBL" id="AK010128">
    <property type="protein sequence ID" value="BAB26719.1"/>
    <property type="molecule type" value="mRNA"/>
</dbReference>
<dbReference type="EMBL" id="AK003395">
    <property type="protein sequence ID" value="BAB22761.1"/>
    <property type="molecule type" value="mRNA"/>
</dbReference>
<dbReference type="EMBL" id="BC062140">
    <property type="protein sequence ID" value="AAH62140.1"/>
    <property type="molecule type" value="mRNA"/>
</dbReference>
<dbReference type="CCDS" id="CCDS50989.1"/>
<dbReference type="RefSeq" id="NP_001078852.1">
    <property type="nucleotide sequence ID" value="NM_001085383.1"/>
</dbReference>
<dbReference type="RefSeq" id="NP_001366474.1">
    <property type="nucleotide sequence ID" value="NM_001379545.1"/>
</dbReference>
<dbReference type="RefSeq" id="NP_076117.2">
    <property type="nucleotide sequence ID" value="NM_023628.3"/>
</dbReference>
<dbReference type="RefSeq" id="XP_011238537.1">
    <property type="nucleotide sequence ID" value="XM_011240235.1"/>
</dbReference>
<dbReference type="SMR" id="Q9JHQ0"/>
<dbReference type="FunCoup" id="Q9JHQ0">
    <property type="interactions" value="10"/>
</dbReference>
<dbReference type="STRING" id="10090.ENSMUSP00000102801"/>
<dbReference type="PhosphoSitePlus" id="Q9JHQ0"/>
<dbReference type="PaxDb" id="10090-ENSMUSP00000102801"/>
<dbReference type="ProteomicsDB" id="281777"/>
<dbReference type="Antibodypedia" id="34042">
    <property type="antibodies" value="226 antibodies from 25 providers"/>
</dbReference>
<dbReference type="DNASU" id="71790"/>
<dbReference type="Ensembl" id="ENSMUST00000015846.9">
    <property type="protein sequence ID" value="ENSMUSP00000015846.3"/>
    <property type="gene ID" value="ENSMUSG00000015702.15"/>
</dbReference>
<dbReference type="Ensembl" id="ENSMUST00000107183.8">
    <property type="protein sequence ID" value="ENSMUSP00000102801.2"/>
    <property type="gene ID" value="ENSMUSG00000015702.15"/>
</dbReference>
<dbReference type="GeneID" id="71790"/>
<dbReference type="KEGG" id="mmu:71790"/>
<dbReference type="UCSC" id="uc008qjg.1">
    <property type="organism name" value="mouse"/>
</dbReference>
<dbReference type="AGR" id="MGI:1923711"/>
<dbReference type="CTD" id="8416"/>
<dbReference type="MGI" id="MGI:1923711">
    <property type="gene designation" value="Anxa9"/>
</dbReference>
<dbReference type="VEuPathDB" id="HostDB:ENSMUSG00000015702"/>
<dbReference type="eggNOG" id="KOG0819">
    <property type="taxonomic scope" value="Eukaryota"/>
</dbReference>
<dbReference type="GeneTree" id="ENSGT00940000161835"/>
<dbReference type="HOGENOM" id="CLU_025300_0_0_1"/>
<dbReference type="InParanoid" id="Q9JHQ0"/>
<dbReference type="OMA" id="HNFQVEA"/>
<dbReference type="OrthoDB" id="37886at2759"/>
<dbReference type="PhylomeDB" id="Q9JHQ0"/>
<dbReference type="TreeFam" id="TF105452"/>
<dbReference type="BioGRID-ORCS" id="71790">
    <property type="hits" value="2 hits in 82 CRISPR screens"/>
</dbReference>
<dbReference type="ChiTaRS" id="Anxa9">
    <property type="organism name" value="mouse"/>
</dbReference>
<dbReference type="PRO" id="PR:Q9JHQ0"/>
<dbReference type="Proteomes" id="UP000000589">
    <property type="component" value="Chromosome 3"/>
</dbReference>
<dbReference type="RNAct" id="Q9JHQ0">
    <property type="molecule type" value="protein"/>
</dbReference>
<dbReference type="Bgee" id="ENSMUSG00000015702">
    <property type="expression patterns" value="Expressed in esophagus and 103 other cell types or tissues"/>
</dbReference>
<dbReference type="ExpressionAtlas" id="Q9JHQ0">
    <property type="expression patterns" value="baseline and differential"/>
</dbReference>
<dbReference type="GO" id="GO:0009986">
    <property type="term" value="C:cell surface"/>
    <property type="evidence" value="ECO:0000250"/>
    <property type="project" value="UniProtKB"/>
</dbReference>
<dbReference type="GO" id="GO:0062023">
    <property type="term" value="C:collagen-containing extracellular matrix"/>
    <property type="evidence" value="ECO:0007005"/>
    <property type="project" value="BHF-UCL"/>
</dbReference>
<dbReference type="GO" id="GO:0005829">
    <property type="term" value="C:cytosol"/>
    <property type="evidence" value="ECO:0000250"/>
    <property type="project" value="UniProtKB"/>
</dbReference>
<dbReference type="GO" id="GO:0045202">
    <property type="term" value="C:synapse"/>
    <property type="evidence" value="ECO:0007669"/>
    <property type="project" value="GOC"/>
</dbReference>
<dbReference type="GO" id="GO:0015464">
    <property type="term" value="F:acetylcholine receptor activity"/>
    <property type="evidence" value="ECO:0000250"/>
    <property type="project" value="UniProtKB"/>
</dbReference>
<dbReference type="GO" id="GO:0005509">
    <property type="term" value="F:calcium ion binding"/>
    <property type="evidence" value="ECO:0007669"/>
    <property type="project" value="InterPro"/>
</dbReference>
<dbReference type="GO" id="GO:0005544">
    <property type="term" value="F:calcium-dependent phospholipid binding"/>
    <property type="evidence" value="ECO:0007669"/>
    <property type="project" value="InterPro"/>
</dbReference>
<dbReference type="GO" id="GO:0001786">
    <property type="term" value="F:phosphatidylserine binding"/>
    <property type="evidence" value="ECO:0000250"/>
    <property type="project" value="UniProtKB"/>
</dbReference>
<dbReference type="GO" id="GO:0005543">
    <property type="term" value="F:phospholipid binding"/>
    <property type="evidence" value="ECO:0000250"/>
    <property type="project" value="UniProtKB"/>
</dbReference>
<dbReference type="GO" id="GO:0098609">
    <property type="term" value="P:cell-cell adhesion"/>
    <property type="evidence" value="ECO:0000250"/>
    <property type="project" value="UniProtKB"/>
</dbReference>
<dbReference type="FunFam" id="1.10.220.10:FF:000001">
    <property type="entry name" value="Annexin"/>
    <property type="match status" value="1"/>
</dbReference>
<dbReference type="FunFam" id="1.10.220.10:FF:000003">
    <property type="entry name" value="Annexin"/>
    <property type="match status" value="1"/>
</dbReference>
<dbReference type="FunFam" id="1.10.220.10:FF:000016">
    <property type="entry name" value="Annexin"/>
    <property type="match status" value="1"/>
</dbReference>
<dbReference type="FunFam" id="1.10.220.10:FF:000017">
    <property type="entry name" value="Annexin"/>
    <property type="match status" value="1"/>
</dbReference>
<dbReference type="Gene3D" id="1.10.220.10">
    <property type="entry name" value="Annexin"/>
    <property type="match status" value="4"/>
</dbReference>
<dbReference type="InterPro" id="IPR001464">
    <property type="entry name" value="Annexin"/>
</dbReference>
<dbReference type="InterPro" id="IPR018502">
    <property type="entry name" value="Annexin_repeat"/>
</dbReference>
<dbReference type="InterPro" id="IPR018252">
    <property type="entry name" value="Annexin_repeat_CS"/>
</dbReference>
<dbReference type="InterPro" id="IPR037104">
    <property type="entry name" value="Annexin_sf"/>
</dbReference>
<dbReference type="InterPro" id="IPR009116">
    <property type="entry name" value="ANX9"/>
</dbReference>
<dbReference type="PANTHER" id="PTHR10502">
    <property type="entry name" value="ANNEXIN"/>
    <property type="match status" value="1"/>
</dbReference>
<dbReference type="PANTHER" id="PTHR10502:SF122">
    <property type="entry name" value="ANNEXIN A9"/>
    <property type="match status" value="1"/>
</dbReference>
<dbReference type="Pfam" id="PF00191">
    <property type="entry name" value="Annexin"/>
    <property type="match status" value="4"/>
</dbReference>
<dbReference type="PRINTS" id="PR00196">
    <property type="entry name" value="ANNEXIN"/>
</dbReference>
<dbReference type="PRINTS" id="PR01812">
    <property type="entry name" value="ANNEXINXXXI"/>
</dbReference>
<dbReference type="SMART" id="SM00335">
    <property type="entry name" value="ANX"/>
    <property type="match status" value="4"/>
</dbReference>
<dbReference type="SUPFAM" id="SSF47874">
    <property type="entry name" value="Annexin"/>
    <property type="match status" value="1"/>
</dbReference>
<dbReference type="PROSITE" id="PS00223">
    <property type="entry name" value="ANNEXIN_1"/>
    <property type="match status" value="1"/>
</dbReference>
<dbReference type="PROSITE" id="PS51897">
    <property type="entry name" value="ANNEXIN_2"/>
    <property type="match status" value="4"/>
</dbReference>